<proteinExistence type="inferred from homology"/>
<keyword id="KW-0963">Cytoplasm</keyword>
<keyword id="KW-0251">Elongation factor</keyword>
<keyword id="KW-0648">Protein biosynthesis</keyword>
<organism>
    <name type="scientific">Treponema pallidum subsp. pallidum (strain SS14)</name>
    <dbReference type="NCBI Taxonomy" id="455434"/>
    <lineage>
        <taxon>Bacteria</taxon>
        <taxon>Pseudomonadati</taxon>
        <taxon>Spirochaetota</taxon>
        <taxon>Spirochaetia</taxon>
        <taxon>Spirochaetales</taxon>
        <taxon>Treponemataceae</taxon>
        <taxon>Treponema</taxon>
    </lineage>
</organism>
<feature type="chain" id="PRO_1000189898" description="Elongation factor Ts">
    <location>
        <begin position="1"/>
        <end position="290"/>
    </location>
</feature>
<feature type="region of interest" description="Involved in Mg(2+) ion dislocation from EF-Tu" evidence="1">
    <location>
        <begin position="87"/>
        <end position="90"/>
    </location>
</feature>
<protein>
    <recommendedName>
        <fullName evidence="1">Elongation factor Ts</fullName>
        <shortName evidence="1">EF-Ts</shortName>
    </recommendedName>
</protein>
<sequence length="290" mass="31783">MEIAARDVKSLRDKTGAGMMECKRALQECAGDALCAEKYLKERGLAAIENRRGRATAEGVIVIKARHAEGAACGASAVAMVELVCETDFVAKNAEFIALAERIAQAVLEHAYTEVNQVLRDMVVDLATRVRENMSLTRLALLRAGSAGAGQYLSHYVHPDKKTGVVLSFSSDAPDVFLRSDVRAFAYDCCLHAAAYTPRYVRAEDVPAEYVREQREVFQAHVASLQKPAHVKESIVQGKLEKHLAEICFLKQPFVKDDKLSVEKKMAEVGARAGGALRFTQALIYQLGVQ</sequence>
<reference key="1">
    <citation type="journal article" date="2008" name="BMC Microbiol.">
        <title>Complete genome sequence of Treponema pallidum ssp. pallidum strain SS14 determined with oligonucleotide arrays.</title>
        <authorList>
            <person name="Matejkova P."/>
            <person name="Strouhal M."/>
            <person name="Smajs D."/>
            <person name="Norris S.J."/>
            <person name="Palzkill T."/>
            <person name="Petrosino J.F."/>
            <person name="Sodergren E."/>
            <person name="Norton J.E."/>
            <person name="Singh J."/>
            <person name="Richmond T.A."/>
            <person name="Molla M.N."/>
            <person name="Albert T.J."/>
            <person name="Weinstock G.M."/>
        </authorList>
    </citation>
    <scope>NUCLEOTIDE SEQUENCE [LARGE SCALE GENOMIC DNA]</scope>
    <source>
        <strain>SS14</strain>
    </source>
</reference>
<gene>
    <name evidence="1" type="primary">tsf</name>
    <name type="ordered locus">TPASS_0605</name>
</gene>
<name>EFTS_TREPS</name>
<comment type="function">
    <text evidence="1">Associates with the EF-Tu.GDP complex and induces the exchange of GDP to GTP. It remains bound to the aminoacyl-tRNA.EF-Tu.GTP complex up to the GTP hydrolysis stage on the ribosome.</text>
</comment>
<comment type="subcellular location">
    <subcellularLocation>
        <location evidence="1">Cytoplasm</location>
    </subcellularLocation>
</comment>
<comment type="similarity">
    <text evidence="1">Belongs to the EF-Ts family.</text>
</comment>
<dbReference type="EMBL" id="CP000805">
    <property type="protein sequence ID" value="ACD71024.1"/>
    <property type="molecule type" value="Genomic_DNA"/>
</dbReference>
<dbReference type="RefSeq" id="WP_010882051.1">
    <property type="nucleotide sequence ID" value="NC_021508.1"/>
</dbReference>
<dbReference type="SMR" id="B2S3J5"/>
<dbReference type="GeneID" id="93876372"/>
<dbReference type="KEGG" id="tpp:TPASS_0605"/>
<dbReference type="PATRIC" id="fig|455434.6.peg.600"/>
<dbReference type="Proteomes" id="UP000001202">
    <property type="component" value="Chromosome"/>
</dbReference>
<dbReference type="GO" id="GO:0005737">
    <property type="term" value="C:cytoplasm"/>
    <property type="evidence" value="ECO:0007669"/>
    <property type="project" value="UniProtKB-SubCell"/>
</dbReference>
<dbReference type="GO" id="GO:0003746">
    <property type="term" value="F:translation elongation factor activity"/>
    <property type="evidence" value="ECO:0007669"/>
    <property type="project" value="UniProtKB-UniRule"/>
</dbReference>
<dbReference type="CDD" id="cd14275">
    <property type="entry name" value="UBA_EF-Ts"/>
    <property type="match status" value="1"/>
</dbReference>
<dbReference type="FunFam" id="1.10.8.10:FF:000001">
    <property type="entry name" value="Elongation factor Ts"/>
    <property type="match status" value="1"/>
</dbReference>
<dbReference type="Gene3D" id="1.10.286.20">
    <property type="match status" value="1"/>
</dbReference>
<dbReference type="Gene3D" id="1.10.8.10">
    <property type="entry name" value="DNA helicase RuvA subunit, C-terminal domain"/>
    <property type="match status" value="1"/>
</dbReference>
<dbReference type="Gene3D" id="3.30.479.20">
    <property type="entry name" value="Elongation factor Ts, dimerisation domain"/>
    <property type="match status" value="2"/>
</dbReference>
<dbReference type="HAMAP" id="MF_00050">
    <property type="entry name" value="EF_Ts"/>
    <property type="match status" value="1"/>
</dbReference>
<dbReference type="InterPro" id="IPR036402">
    <property type="entry name" value="EF-Ts_dimer_sf"/>
</dbReference>
<dbReference type="InterPro" id="IPR001816">
    <property type="entry name" value="Transl_elong_EFTs/EF1B"/>
</dbReference>
<dbReference type="InterPro" id="IPR014039">
    <property type="entry name" value="Transl_elong_EFTs/EF1B_dimer"/>
</dbReference>
<dbReference type="InterPro" id="IPR018101">
    <property type="entry name" value="Transl_elong_Ts_CS"/>
</dbReference>
<dbReference type="InterPro" id="IPR009060">
    <property type="entry name" value="UBA-like_sf"/>
</dbReference>
<dbReference type="NCBIfam" id="TIGR00116">
    <property type="entry name" value="tsf"/>
    <property type="match status" value="1"/>
</dbReference>
<dbReference type="PANTHER" id="PTHR11741">
    <property type="entry name" value="ELONGATION FACTOR TS"/>
    <property type="match status" value="1"/>
</dbReference>
<dbReference type="PANTHER" id="PTHR11741:SF0">
    <property type="entry name" value="ELONGATION FACTOR TS, MITOCHONDRIAL"/>
    <property type="match status" value="1"/>
</dbReference>
<dbReference type="Pfam" id="PF00889">
    <property type="entry name" value="EF_TS"/>
    <property type="match status" value="1"/>
</dbReference>
<dbReference type="SUPFAM" id="SSF54713">
    <property type="entry name" value="Elongation factor Ts (EF-Ts), dimerisation domain"/>
    <property type="match status" value="2"/>
</dbReference>
<dbReference type="SUPFAM" id="SSF46934">
    <property type="entry name" value="UBA-like"/>
    <property type="match status" value="1"/>
</dbReference>
<dbReference type="PROSITE" id="PS01126">
    <property type="entry name" value="EF_TS_1"/>
    <property type="match status" value="1"/>
</dbReference>
<dbReference type="PROSITE" id="PS01127">
    <property type="entry name" value="EF_TS_2"/>
    <property type="match status" value="1"/>
</dbReference>
<evidence type="ECO:0000255" key="1">
    <source>
        <dbReference type="HAMAP-Rule" id="MF_00050"/>
    </source>
</evidence>
<accession>B2S3J5</accession>